<proteinExistence type="evidence at transcript level"/>
<organism>
    <name type="scientific">Arabidopsis thaliana</name>
    <name type="common">Mouse-ear cress</name>
    <dbReference type="NCBI Taxonomy" id="3702"/>
    <lineage>
        <taxon>Eukaryota</taxon>
        <taxon>Viridiplantae</taxon>
        <taxon>Streptophyta</taxon>
        <taxon>Embryophyta</taxon>
        <taxon>Tracheophyta</taxon>
        <taxon>Spermatophyta</taxon>
        <taxon>Magnoliopsida</taxon>
        <taxon>eudicotyledons</taxon>
        <taxon>Gunneridae</taxon>
        <taxon>Pentapetalae</taxon>
        <taxon>rosids</taxon>
        <taxon>malvids</taxon>
        <taxon>Brassicales</taxon>
        <taxon>Brassicaceae</taxon>
        <taxon>Camelineae</taxon>
        <taxon>Arabidopsis</taxon>
    </lineage>
</organism>
<evidence type="ECO:0000250" key="1"/>
<evidence type="ECO:0000255" key="2">
    <source>
        <dbReference type="PROSITE-ProRule" id="PRU00143"/>
    </source>
</evidence>
<evidence type="ECO:0000256" key="3">
    <source>
        <dbReference type="SAM" id="MobiDB-lite"/>
    </source>
</evidence>
<evidence type="ECO:0000305" key="4"/>
<reference key="1">
    <citation type="journal article" date="2000" name="Nature">
        <title>Sequence and analysis of chromosome 3 of the plant Arabidopsis thaliana.</title>
        <authorList>
            <person name="Salanoubat M."/>
            <person name="Lemcke K."/>
            <person name="Rieger M."/>
            <person name="Ansorge W."/>
            <person name="Unseld M."/>
            <person name="Fartmann B."/>
            <person name="Valle G."/>
            <person name="Bloecker H."/>
            <person name="Perez-Alonso M."/>
            <person name="Obermaier B."/>
            <person name="Delseny M."/>
            <person name="Boutry M."/>
            <person name="Grivell L.A."/>
            <person name="Mache R."/>
            <person name="Puigdomenech P."/>
            <person name="De Simone V."/>
            <person name="Choisne N."/>
            <person name="Artiguenave F."/>
            <person name="Robert C."/>
            <person name="Brottier P."/>
            <person name="Wincker P."/>
            <person name="Cattolico L."/>
            <person name="Weissenbach J."/>
            <person name="Saurin W."/>
            <person name="Quetier F."/>
            <person name="Schaefer M."/>
            <person name="Mueller-Auer S."/>
            <person name="Gabel C."/>
            <person name="Fuchs M."/>
            <person name="Benes V."/>
            <person name="Wurmbach E."/>
            <person name="Drzonek H."/>
            <person name="Erfle H."/>
            <person name="Jordan N."/>
            <person name="Bangert S."/>
            <person name="Wiedelmann R."/>
            <person name="Kranz H."/>
            <person name="Voss H."/>
            <person name="Holland R."/>
            <person name="Brandt P."/>
            <person name="Nyakatura G."/>
            <person name="Vezzi A."/>
            <person name="D'Angelo M."/>
            <person name="Pallavicini A."/>
            <person name="Toppo S."/>
            <person name="Simionati B."/>
            <person name="Conrad A."/>
            <person name="Hornischer K."/>
            <person name="Kauer G."/>
            <person name="Loehnert T.-H."/>
            <person name="Nordsiek G."/>
            <person name="Reichelt J."/>
            <person name="Scharfe M."/>
            <person name="Schoen O."/>
            <person name="Bargues M."/>
            <person name="Terol J."/>
            <person name="Climent J."/>
            <person name="Navarro P."/>
            <person name="Collado C."/>
            <person name="Perez-Perez A."/>
            <person name="Ottenwaelder B."/>
            <person name="Duchemin D."/>
            <person name="Cooke R."/>
            <person name="Laudie M."/>
            <person name="Berger-Llauro C."/>
            <person name="Purnelle B."/>
            <person name="Masuy D."/>
            <person name="de Haan M."/>
            <person name="Maarse A.C."/>
            <person name="Alcaraz J.-P."/>
            <person name="Cottet A."/>
            <person name="Casacuberta E."/>
            <person name="Monfort A."/>
            <person name="Argiriou A."/>
            <person name="Flores M."/>
            <person name="Liguori R."/>
            <person name="Vitale D."/>
            <person name="Mannhaupt G."/>
            <person name="Haase D."/>
            <person name="Schoof H."/>
            <person name="Rudd S."/>
            <person name="Zaccaria P."/>
            <person name="Mewes H.-W."/>
            <person name="Mayer K.F.X."/>
            <person name="Kaul S."/>
            <person name="Town C.D."/>
            <person name="Koo H.L."/>
            <person name="Tallon L.J."/>
            <person name="Jenkins J."/>
            <person name="Rooney T."/>
            <person name="Rizzo M."/>
            <person name="Walts A."/>
            <person name="Utterback T."/>
            <person name="Fujii C.Y."/>
            <person name="Shea T.P."/>
            <person name="Creasy T.H."/>
            <person name="Haas B."/>
            <person name="Maiti R."/>
            <person name="Wu D."/>
            <person name="Peterson J."/>
            <person name="Van Aken S."/>
            <person name="Pai G."/>
            <person name="Militscher J."/>
            <person name="Sellers P."/>
            <person name="Gill J.E."/>
            <person name="Feldblyum T.V."/>
            <person name="Preuss D."/>
            <person name="Lin X."/>
            <person name="Nierman W.C."/>
            <person name="Salzberg S.L."/>
            <person name="White O."/>
            <person name="Venter J.C."/>
            <person name="Fraser C.M."/>
            <person name="Kaneko T."/>
            <person name="Nakamura Y."/>
            <person name="Sato S."/>
            <person name="Kato T."/>
            <person name="Asamizu E."/>
            <person name="Sasamoto S."/>
            <person name="Kimura T."/>
            <person name="Idesawa K."/>
            <person name="Kawashima K."/>
            <person name="Kishida Y."/>
            <person name="Kiyokawa C."/>
            <person name="Kohara M."/>
            <person name="Matsumoto M."/>
            <person name="Matsuno A."/>
            <person name="Muraki A."/>
            <person name="Nakayama S."/>
            <person name="Nakazaki N."/>
            <person name="Shinpo S."/>
            <person name="Takeuchi C."/>
            <person name="Wada T."/>
            <person name="Watanabe A."/>
            <person name="Yamada M."/>
            <person name="Yasuda M."/>
            <person name="Tabata S."/>
        </authorList>
    </citation>
    <scope>NUCLEOTIDE SEQUENCE [LARGE SCALE GENOMIC DNA]</scope>
    <source>
        <strain>cv. Columbia</strain>
    </source>
</reference>
<reference key="2">
    <citation type="journal article" date="2017" name="Plant J.">
        <title>Araport11: a complete reannotation of the Arabidopsis thaliana reference genome.</title>
        <authorList>
            <person name="Cheng C.Y."/>
            <person name="Krishnakumar V."/>
            <person name="Chan A.P."/>
            <person name="Thibaud-Nissen F."/>
            <person name="Schobel S."/>
            <person name="Town C.D."/>
        </authorList>
    </citation>
    <scope>GENOME REANNOTATION</scope>
    <source>
        <strain>cv. Columbia</strain>
    </source>
</reference>
<reference key="3">
    <citation type="journal article" date="2003" name="Science">
        <title>Empirical analysis of transcriptional activity in the Arabidopsis genome.</title>
        <authorList>
            <person name="Yamada K."/>
            <person name="Lim J."/>
            <person name="Dale J.M."/>
            <person name="Chen H."/>
            <person name="Shinn P."/>
            <person name="Palm C.J."/>
            <person name="Southwick A.M."/>
            <person name="Wu H.C."/>
            <person name="Kim C.J."/>
            <person name="Nguyen M."/>
            <person name="Pham P.K."/>
            <person name="Cheuk R.F."/>
            <person name="Karlin-Newmann G."/>
            <person name="Liu S.X."/>
            <person name="Lam B."/>
            <person name="Sakano H."/>
            <person name="Wu T."/>
            <person name="Yu G."/>
            <person name="Miranda M."/>
            <person name="Quach H.L."/>
            <person name="Tripp M."/>
            <person name="Chang C.H."/>
            <person name="Lee J.M."/>
            <person name="Toriumi M.J."/>
            <person name="Chan M.M."/>
            <person name="Tang C.C."/>
            <person name="Onodera C.S."/>
            <person name="Deng J.M."/>
            <person name="Akiyama K."/>
            <person name="Ansari Y."/>
            <person name="Arakawa T."/>
            <person name="Banh J."/>
            <person name="Banno F."/>
            <person name="Bowser L."/>
            <person name="Brooks S.Y."/>
            <person name="Carninci P."/>
            <person name="Chao Q."/>
            <person name="Choy N."/>
            <person name="Enju A."/>
            <person name="Goldsmith A.D."/>
            <person name="Gurjal M."/>
            <person name="Hansen N.F."/>
            <person name="Hayashizaki Y."/>
            <person name="Johnson-Hopson C."/>
            <person name="Hsuan V.W."/>
            <person name="Iida K."/>
            <person name="Karnes M."/>
            <person name="Khan S."/>
            <person name="Koesema E."/>
            <person name="Ishida J."/>
            <person name="Jiang P.X."/>
            <person name="Jones T."/>
            <person name="Kawai J."/>
            <person name="Kamiya A."/>
            <person name="Meyers C."/>
            <person name="Nakajima M."/>
            <person name="Narusaka M."/>
            <person name="Seki M."/>
            <person name="Sakurai T."/>
            <person name="Satou M."/>
            <person name="Tamse R."/>
            <person name="Vaysberg M."/>
            <person name="Wallender E.K."/>
            <person name="Wong C."/>
            <person name="Yamamura Y."/>
            <person name="Yuan S."/>
            <person name="Shinozaki K."/>
            <person name="Davis R.W."/>
            <person name="Theologis A."/>
            <person name="Ecker J.R."/>
        </authorList>
    </citation>
    <scope>NUCLEOTIDE SEQUENCE [LARGE SCALE MRNA]</scope>
    <source>
        <strain>cv. Columbia</strain>
    </source>
</reference>
<reference key="4">
    <citation type="journal article" date="2001" name="Plant Physiol.">
        <title>Chloroplast and mitochondrial proteases in Arabidopsis. A proposed nomenclature.</title>
        <authorList>
            <person name="Adam Z."/>
            <person name="Adamska I."/>
            <person name="Nakabayashi K."/>
            <person name="Ostersetzer O."/>
            <person name="Haussuhl K."/>
            <person name="Manuell A."/>
            <person name="Zheng B."/>
            <person name="Vallon O."/>
            <person name="Rodermel S.R."/>
            <person name="Shinozaki K."/>
            <person name="Clarke A.K."/>
        </authorList>
    </citation>
    <scope>GENE FAMILY</scope>
    <scope>NOMENCLATURE</scope>
</reference>
<keyword id="KW-0963">Cytoplasm</keyword>
<keyword id="KW-0378">Hydrolase</keyword>
<keyword id="KW-0645">Protease</keyword>
<keyword id="KW-1185">Reference proteome</keyword>
<keyword id="KW-0720">Serine protease</keyword>
<name>DEGP7_ARATH</name>
<gene>
    <name type="primary">DEGP7</name>
    <name type="ordered locus">At3g03380</name>
    <name type="ORF">T21P5.19</name>
    <name type="ORF">T21P5.20</name>
</gene>
<accession>Q8RY22</accession>
<accession>Q9SRP2</accession>
<accession>Q9SRP3</accession>
<comment type="function">
    <text>Probable serine protease.</text>
</comment>
<comment type="subcellular location">
    <subcellularLocation>
        <location evidence="4">Cytoplasm</location>
    </subcellularLocation>
</comment>
<comment type="similarity">
    <text evidence="4">Belongs to the peptidase S1C family.</text>
</comment>
<comment type="caution">
    <text evidence="4">Lacks the conserved Asp residue in position 654 essential for protease activity.</text>
</comment>
<comment type="sequence caution" evidence="4">
    <conflict type="erroneous gene model prediction">
        <sequence resource="EMBL-CDS" id="AAF01593"/>
    </conflict>
</comment>
<comment type="sequence caution" evidence="4">
    <conflict type="erroneous gene model prediction">
        <sequence resource="EMBL-CDS" id="AAF01594"/>
    </conflict>
</comment>
<protein>
    <recommendedName>
        <fullName>Protease Do-like 7</fullName>
        <ecNumber>3.4.21.-</ecNumber>
    </recommendedName>
</protein>
<feature type="chain" id="PRO_0000093862" description="Protease Do-like 7">
    <location>
        <begin position="1"/>
        <end position="1097"/>
    </location>
</feature>
<feature type="domain" description="PDZ" evidence="2">
    <location>
        <begin position="269"/>
        <end position="366"/>
    </location>
</feature>
<feature type="region of interest" description="Serine protease">
    <location>
        <begin position="55"/>
        <end position="243"/>
    </location>
</feature>
<feature type="region of interest" description="Disordered" evidence="3">
    <location>
        <begin position="546"/>
        <end position="577"/>
    </location>
</feature>
<feature type="compositionally biased region" description="Polar residues" evidence="3">
    <location>
        <begin position="546"/>
        <end position="556"/>
    </location>
</feature>
<feature type="compositionally biased region" description="Basic and acidic residues" evidence="3">
    <location>
        <begin position="558"/>
        <end position="567"/>
    </location>
</feature>
<feature type="active site" description="Charge relay system" evidence="1">
    <location>
        <position position="524"/>
    </location>
</feature>
<feature type="active site" description="Charge relay system" evidence="1">
    <location>
        <position position="785"/>
    </location>
</feature>
<dbReference type="EC" id="3.4.21.-"/>
<dbReference type="EMBL" id="AC009895">
    <property type="protein sequence ID" value="AAF01593.1"/>
    <property type="status" value="ALT_SEQ"/>
    <property type="molecule type" value="Genomic_DNA"/>
</dbReference>
<dbReference type="EMBL" id="AC009895">
    <property type="protein sequence ID" value="AAF01594.1"/>
    <property type="status" value="ALT_SEQ"/>
    <property type="molecule type" value="Genomic_DNA"/>
</dbReference>
<dbReference type="EMBL" id="CP002686">
    <property type="protein sequence ID" value="AEE73938.1"/>
    <property type="molecule type" value="Genomic_DNA"/>
</dbReference>
<dbReference type="EMBL" id="AY078951">
    <property type="protein sequence ID" value="AAL84951.1"/>
    <property type="molecule type" value="mRNA"/>
</dbReference>
<dbReference type="EMBL" id="BT002727">
    <property type="protein sequence ID" value="AAO11643.1"/>
    <property type="molecule type" value="mRNA"/>
</dbReference>
<dbReference type="SMR" id="Q8RY22"/>
<dbReference type="BioGRID" id="6601">
    <property type="interactions" value="4"/>
</dbReference>
<dbReference type="FunCoup" id="Q8RY22">
    <property type="interactions" value="1487"/>
</dbReference>
<dbReference type="STRING" id="3702.Q8RY22"/>
<dbReference type="iPTMnet" id="Q8RY22"/>
<dbReference type="PaxDb" id="3702-AT3G03380.1"/>
<dbReference type="ProteomicsDB" id="222204"/>
<dbReference type="EnsemblPlants" id="AT3G03380.1">
    <property type="protein sequence ID" value="AT3G03380.1"/>
    <property type="gene ID" value="AT3G03380"/>
</dbReference>
<dbReference type="GeneID" id="821268"/>
<dbReference type="Gramene" id="AT3G03380.1">
    <property type="protein sequence ID" value="AT3G03380.1"/>
    <property type="gene ID" value="AT3G03380"/>
</dbReference>
<dbReference type="KEGG" id="ath:AT3G03380"/>
<dbReference type="Araport" id="AT3G03380"/>
<dbReference type="TAIR" id="AT3G03380">
    <property type="gene designation" value="DEG7"/>
</dbReference>
<dbReference type="eggNOG" id="KOG1421">
    <property type="taxonomic scope" value="Eukaryota"/>
</dbReference>
<dbReference type="HOGENOM" id="CLU_003212_1_1_1"/>
<dbReference type="InParanoid" id="Q8RY22"/>
<dbReference type="PhylomeDB" id="Q8RY22"/>
<dbReference type="PRO" id="PR:Q8RY22"/>
<dbReference type="Proteomes" id="UP000006548">
    <property type="component" value="Chromosome 3"/>
</dbReference>
<dbReference type="ExpressionAtlas" id="Q8RY22">
    <property type="expression patterns" value="baseline and differential"/>
</dbReference>
<dbReference type="GO" id="GO:0009507">
    <property type="term" value="C:chloroplast"/>
    <property type="evidence" value="ECO:0000314"/>
    <property type="project" value="TAIR"/>
</dbReference>
<dbReference type="GO" id="GO:0008233">
    <property type="term" value="F:peptidase activity"/>
    <property type="evidence" value="ECO:0000314"/>
    <property type="project" value="TAIR"/>
</dbReference>
<dbReference type="GO" id="GO:0004252">
    <property type="term" value="F:serine-type endopeptidase activity"/>
    <property type="evidence" value="ECO:0007669"/>
    <property type="project" value="InterPro"/>
</dbReference>
<dbReference type="GO" id="GO:0010205">
    <property type="term" value="P:photoinhibition"/>
    <property type="evidence" value="ECO:0000315"/>
    <property type="project" value="TAIR"/>
</dbReference>
<dbReference type="GO" id="GO:0006508">
    <property type="term" value="P:proteolysis"/>
    <property type="evidence" value="ECO:0007669"/>
    <property type="project" value="UniProtKB-KW"/>
</dbReference>
<dbReference type="CDD" id="cd06786">
    <property type="entry name" value="cpPDZ1_ScNma111-like"/>
    <property type="match status" value="1"/>
</dbReference>
<dbReference type="CDD" id="cd06787">
    <property type="entry name" value="cpPDZ_AthDEGP7-like"/>
    <property type="match status" value="1"/>
</dbReference>
<dbReference type="FunFam" id="2.30.42.10:FF:000268">
    <property type="entry name" value="DegP protease 7"/>
    <property type="match status" value="1"/>
</dbReference>
<dbReference type="FunFam" id="2.40.10.10:FF:000162">
    <property type="entry name" value="Protease Do-like 7"/>
    <property type="match status" value="1"/>
</dbReference>
<dbReference type="Gene3D" id="2.30.42.10">
    <property type="match status" value="3"/>
</dbReference>
<dbReference type="Gene3D" id="2.40.10.120">
    <property type="match status" value="1"/>
</dbReference>
<dbReference type="Gene3D" id="2.40.10.10">
    <property type="entry name" value="Trypsin-like serine proteases"/>
    <property type="match status" value="2"/>
</dbReference>
<dbReference type="InterPro" id="IPR001478">
    <property type="entry name" value="PDZ"/>
</dbReference>
<dbReference type="InterPro" id="IPR025926">
    <property type="entry name" value="PDZ-like_dom"/>
</dbReference>
<dbReference type="InterPro" id="IPR036034">
    <property type="entry name" value="PDZ_sf"/>
</dbReference>
<dbReference type="InterPro" id="IPR009003">
    <property type="entry name" value="Peptidase_S1_PA"/>
</dbReference>
<dbReference type="InterPro" id="IPR043504">
    <property type="entry name" value="Peptidase_S1_PA_chymotrypsin"/>
</dbReference>
<dbReference type="InterPro" id="IPR001940">
    <property type="entry name" value="Peptidase_S1C"/>
</dbReference>
<dbReference type="PANTHER" id="PTHR46366:SF1">
    <property type="entry name" value="PDZ DOMAIN-CONTAINING PROTEIN C1685.05"/>
    <property type="match status" value="1"/>
</dbReference>
<dbReference type="PANTHER" id="PTHR46366">
    <property type="entry name" value="PRO-APOPTOTIC SERINE PROTEASE NMA111"/>
    <property type="match status" value="1"/>
</dbReference>
<dbReference type="Pfam" id="PF12812">
    <property type="entry name" value="PDZ_1"/>
    <property type="match status" value="2"/>
</dbReference>
<dbReference type="Pfam" id="PF13180">
    <property type="entry name" value="PDZ_2"/>
    <property type="match status" value="1"/>
</dbReference>
<dbReference type="Pfam" id="PF13365">
    <property type="entry name" value="Trypsin_2"/>
    <property type="match status" value="1"/>
</dbReference>
<dbReference type="PRINTS" id="PR00834">
    <property type="entry name" value="PROTEASES2C"/>
</dbReference>
<dbReference type="SMART" id="SM00228">
    <property type="entry name" value="PDZ"/>
    <property type="match status" value="3"/>
</dbReference>
<dbReference type="SUPFAM" id="SSF50156">
    <property type="entry name" value="PDZ domain-like"/>
    <property type="match status" value="3"/>
</dbReference>
<dbReference type="SUPFAM" id="SSF50494">
    <property type="entry name" value="Trypsin-like serine proteases"/>
    <property type="match status" value="2"/>
</dbReference>
<dbReference type="PROSITE" id="PS50106">
    <property type="entry name" value="PDZ"/>
    <property type="match status" value="1"/>
</dbReference>
<sequence length="1097" mass="119877">MGDPLERLGSQASMATESVMKEDLCLEIDPPLTESVATAEDWRRALGKVVPAVVVLRTTACRAFDTESAGASYATGFIVDKRRGIILTNRHVVKPGPVVAEAMFVNREEIPIYPVYRDPVHDFGFFCYDPSAVQFLTYQEIPLAPEAASVGLEIRVVGNDSGEKVSILAGTLARLDRDAPHYKKDGYNDFNTFYMQAASGTKGGSSGSPVIDWQGRAVALNAGSKSSSASAFFLPLQRVVRALSFLQKSIDSRTDKPKAVHIPRGTLQMTFLHKGFDEIRRLGLRSETEQVVRHASPTGETGMLVVDSVVPSGPADKHLEPGDVLVRVNGTVLTQFLNLENLLDDGVGQILELEIERGGQPLSVSVSVQDLHSITPDHFLEVSGAVIHPLSYQQARNFRFPCGLAYVADPGYMLFRAGVPRHAIIKKVANEDISSLGDLVSVLSKLSRGARVPLEYMSHTDRHRKKSVLVTIDHHEWYAPPQLYTRNDSSGLWDAKPAIEPASVSPSIGNNGFPISQDISLCHHDTEPMHEVNVRGVTDIAAIMETSSGDGSQNDFGSEAKKQRVDEDSSDGIAANGSLYGSEFKSDDAMETDTTVLRDFEGATALSANASLAERAIEPALVMFEVHVPPSCSLDGVHSQHFFGTGIIIYHSSNMGLAVVDKNTVAISASDVMLSFAAFPVEIPGEVVFLHPVHNYALIAYNPSAMDPASASVIRAAELLPEPALQRGDSVYLVGLSRNLQATSRKSIVTNPCAALNIGSADSPRYRATNMEVIELDTDFGSSFSGALTDEQGRIRAIWGSFSTQVKYSSTSSEDHQFVRGIPVYAISQVLEKIITGGNGPALLINGVKRPMPLVRILEVELYPTLLSKARSFGLSDEWIQVLVKKDPVRRQVLRVKGCLAGSKAENLLEQGDMVLAVNKMPVTCFNDIEAACQTLDKGSYSDENLNLTILRQGQELELVVGTDKRDGNGTTRVINWCGCVVQDPHPAVRALGFLPEEGHGVYVTRWCHGSPAHRYGLYALQWIVEVNGKKTPDLNAFADATKELEHGQFVRIRTVHLNGKPRVLTLKQDLHYWPTWELRFDPETALWRRNILKALQ</sequence>